<proteinExistence type="inferred from homology"/>
<feature type="chain" id="PRO_0000160452" description="ATP-dependent Clp protease ATP-binding subunit ClpX">
    <location>
        <begin position="1"/>
        <end position="426"/>
    </location>
</feature>
<feature type="domain" description="ClpX-type ZB" evidence="2">
    <location>
        <begin position="4"/>
        <end position="57"/>
    </location>
</feature>
<feature type="binding site" evidence="2">
    <location>
        <position position="16"/>
    </location>
    <ligand>
        <name>Zn(2+)</name>
        <dbReference type="ChEBI" id="CHEBI:29105"/>
    </ligand>
</feature>
<feature type="binding site" evidence="2">
    <location>
        <position position="19"/>
    </location>
    <ligand>
        <name>Zn(2+)</name>
        <dbReference type="ChEBI" id="CHEBI:29105"/>
    </ligand>
</feature>
<feature type="binding site" evidence="2">
    <location>
        <position position="38"/>
    </location>
    <ligand>
        <name>Zn(2+)</name>
        <dbReference type="ChEBI" id="CHEBI:29105"/>
    </ligand>
</feature>
<feature type="binding site" evidence="2">
    <location>
        <position position="41"/>
    </location>
    <ligand>
        <name>Zn(2+)</name>
        <dbReference type="ChEBI" id="CHEBI:29105"/>
    </ligand>
</feature>
<feature type="binding site" evidence="1">
    <location>
        <begin position="122"/>
        <end position="129"/>
    </location>
    <ligand>
        <name>ATP</name>
        <dbReference type="ChEBI" id="CHEBI:30616"/>
    </ligand>
</feature>
<comment type="function">
    <text evidence="1">ATP-dependent specificity component of the Clp protease. It directs the protease to specific substrates. Can perform chaperone functions in the absence of ClpP.</text>
</comment>
<comment type="subunit">
    <text evidence="1">Component of the ClpX-ClpP complex. Forms a hexameric ring that, in the presence of ATP, binds to fourteen ClpP subunits assembled into a disk-like structure with a central cavity, resembling the structure of eukaryotic proteasomes.</text>
</comment>
<comment type="similarity">
    <text evidence="1">Belongs to the ClpX chaperone family.</text>
</comment>
<evidence type="ECO:0000255" key="1">
    <source>
        <dbReference type="HAMAP-Rule" id="MF_00175"/>
    </source>
</evidence>
<evidence type="ECO:0000255" key="2">
    <source>
        <dbReference type="PROSITE-ProRule" id="PRU01250"/>
    </source>
</evidence>
<protein>
    <recommendedName>
        <fullName evidence="1">ATP-dependent Clp protease ATP-binding subunit ClpX</fullName>
    </recommendedName>
</protein>
<dbReference type="EMBL" id="BA000031">
    <property type="protein sequence ID" value="BAC59181.1"/>
    <property type="molecule type" value="Genomic_DNA"/>
</dbReference>
<dbReference type="RefSeq" id="NP_797297.1">
    <property type="nucleotide sequence ID" value="NC_004603.1"/>
</dbReference>
<dbReference type="RefSeq" id="WP_005460618.1">
    <property type="nucleotide sequence ID" value="NC_004603.1"/>
</dbReference>
<dbReference type="SMR" id="Q87R79"/>
<dbReference type="GeneID" id="1188416"/>
<dbReference type="KEGG" id="vpa:VP0918"/>
<dbReference type="PATRIC" id="fig|223926.6.peg.870"/>
<dbReference type="eggNOG" id="COG1219">
    <property type="taxonomic scope" value="Bacteria"/>
</dbReference>
<dbReference type="HOGENOM" id="CLU_014218_8_2_6"/>
<dbReference type="Proteomes" id="UP000002493">
    <property type="component" value="Chromosome 1"/>
</dbReference>
<dbReference type="GO" id="GO:0009376">
    <property type="term" value="C:HslUV protease complex"/>
    <property type="evidence" value="ECO:0007669"/>
    <property type="project" value="TreeGrafter"/>
</dbReference>
<dbReference type="GO" id="GO:0005524">
    <property type="term" value="F:ATP binding"/>
    <property type="evidence" value="ECO:0007669"/>
    <property type="project" value="UniProtKB-UniRule"/>
</dbReference>
<dbReference type="GO" id="GO:0016887">
    <property type="term" value="F:ATP hydrolysis activity"/>
    <property type="evidence" value="ECO:0007669"/>
    <property type="project" value="InterPro"/>
</dbReference>
<dbReference type="GO" id="GO:0140662">
    <property type="term" value="F:ATP-dependent protein folding chaperone"/>
    <property type="evidence" value="ECO:0007669"/>
    <property type="project" value="InterPro"/>
</dbReference>
<dbReference type="GO" id="GO:0046983">
    <property type="term" value="F:protein dimerization activity"/>
    <property type="evidence" value="ECO:0007669"/>
    <property type="project" value="InterPro"/>
</dbReference>
<dbReference type="GO" id="GO:0051082">
    <property type="term" value="F:unfolded protein binding"/>
    <property type="evidence" value="ECO:0007669"/>
    <property type="project" value="UniProtKB-UniRule"/>
</dbReference>
<dbReference type="GO" id="GO:0008270">
    <property type="term" value="F:zinc ion binding"/>
    <property type="evidence" value="ECO:0007669"/>
    <property type="project" value="InterPro"/>
</dbReference>
<dbReference type="GO" id="GO:0051301">
    <property type="term" value="P:cell division"/>
    <property type="evidence" value="ECO:0007669"/>
    <property type="project" value="TreeGrafter"/>
</dbReference>
<dbReference type="GO" id="GO:0051603">
    <property type="term" value="P:proteolysis involved in protein catabolic process"/>
    <property type="evidence" value="ECO:0007669"/>
    <property type="project" value="TreeGrafter"/>
</dbReference>
<dbReference type="CDD" id="cd19497">
    <property type="entry name" value="RecA-like_ClpX"/>
    <property type="match status" value="1"/>
</dbReference>
<dbReference type="FunFam" id="1.10.8.60:FF:000002">
    <property type="entry name" value="ATP-dependent Clp protease ATP-binding subunit ClpX"/>
    <property type="match status" value="1"/>
</dbReference>
<dbReference type="FunFam" id="3.40.50.300:FF:000005">
    <property type="entry name" value="ATP-dependent Clp protease ATP-binding subunit ClpX"/>
    <property type="match status" value="1"/>
</dbReference>
<dbReference type="Gene3D" id="1.10.8.60">
    <property type="match status" value="1"/>
</dbReference>
<dbReference type="Gene3D" id="6.20.220.10">
    <property type="entry name" value="ClpX chaperone, C4-type zinc finger domain"/>
    <property type="match status" value="1"/>
</dbReference>
<dbReference type="Gene3D" id="3.40.50.300">
    <property type="entry name" value="P-loop containing nucleotide triphosphate hydrolases"/>
    <property type="match status" value="1"/>
</dbReference>
<dbReference type="HAMAP" id="MF_00175">
    <property type="entry name" value="ClpX"/>
    <property type="match status" value="1"/>
</dbReference>
<dbReference type="InterPro" id="IPR003593">
    <property type="entry name" value="AAA+_ATPase"/>
</dbReference>
<dbReference type="InterPro" id="IPR050052">
    <property type="entry name" value="ATP-dep_Clp_protease_ClpX"/>
</dbReference>
<dbReference type="InterPro" id="IPR003959">
    <property type="entry name" value="ATPase_AAA_core"/>
</dbReference>
<dbReference type="InterPro" id="IPR019489">
    <property type="entry name" value="Clp_ATPase_C"/>
</dbReference>
<dbReference type="InterPro" id="IPR004487">
    <property type="entry name" value="Clp_protease_ATP-bd_su_ClpX"/>
</dbReference>
<dbReference type="InterPro" id="IPR046425">
    <property type="entry name" value="ClpX_bact"/>
</dbReference>
<dbReference type="InterPro" id="IPR027417">
    <property type="entry name" value="P-loop_NTPase"/>
</dbReference>
<dbReference type="InterPro" id="IPR010603">
    <property type="entry name" value="Znf_CppX_C4"/>
</dbReference>
<dbReference type="InterPro" id="IPR038366">
    <property type="entry name" value="Znf_CppX_C4_sf"/>
</dbReference>
<dbReference type="NCBIfam" id="TIGR00382">
    <property type="entry name" value="clpX"/>
    <property type="match status" value="1"/>
</dbReference>
<dbReference type="NCBIfam" id="NF003745">
    <property type="entry name" value="PRK05342.1"/>
    <property type="match status" value="1"/>
</dbReference>
<dbReference type="PANTHER" id="PTHR48102:SF7">
    <property type="entry name" value="ATP-DEPENDENT CLP PROTEASE ATP-BINDING SUBUNIT CLPX-LIKE, MITOCHONDRIAL"/>
    <property type="match status" value="1"/>
</dbReference>
<dbReference type="PANTHER" id="PTHR48102">
    <property type="entry name" value="ATP-DEPENDENT CLP PROTEASE ATP-BINDING SUBUNIT CLPX-LIKE, MITOCHONDRIAL-RELATED"/>
    <property type="match status" value="1"/>
</dbReference>
<dbReference type="Pfam" id="PF07724">
    <property type="entry name" value="AAA_2"/>
    <property type="match status" value="1"/>
</dbReference>
<dbReference type="Pfam" id="PF10431">
    <property type="entry name" value="ClpB_D2-small"/>
    <property type="match status" value="1"/>
</dbReference>
<dbReference type="Pfam" id="PF06689">
    <property type="entry name" value="zf-C4_ClpX"/>
    <property type="match status" value="1"/>
</dbReference>
<dbReference type="SMART" id="SM00382">
    <property type="entry name" value="AAA"/>
    <property type="match status" value="1"/>
</dbReference>
<dbReference type="SMART" id="SM01086">
    <property type="entry name" value="ClpB_D2-small"/>
    <property type="match status" value="1"/>
</dbReference>
<dbReference type="SMART" id="SM00994">
    <property type="entry name" value="zf-C4_ClpX"/>
    <property type="match status" value="1"/>
</dbReference>
<dbReference type="SUPFAM" id="SSF57716">
    <property type="entry name" value="Glucocorticoid receptor-like (DNA-binding domain)"/>
    <property type="match status" value="1"/>
</dbReference>
<dbReference type="SUPFAM" id="SSF52540">
    <property type="entry name" value="P-loop containing nucleoside triphosphate hydrolases"/>
    <property type="match status" value="1"/>
</dbReference>
<dbReference type="PROSITE" id="PS51902">
    <property type="entry name" value="CLPX_ZB"/>
    <property type="match status" value="1"/>
</dbReference>
<reference key="1">
    <citation type="journal article" date="2003" name="Lancet">
        <title>Genome sequence of Vibrio parahaemolyticus: a pathogenic mechanism distinct from that of V. cholerae.</title>
        <authorList>
            <person name="Makino K."/>
            <person name="Oshima K."/>
            <person name="Kurokawa K."/>
            <person name="Yokoyama K."/>
            <person name="Uda T."/>
            <person name="Tagomori K."/>
            <person name="Iijima Y."/>
            <person name="Najima M."/>
            <person name="Nakano M."/>
            <person name="Yamashita A."/>
            <person name="Kubota Y."/>
            <person name="Kimura S."/>
            <person name="Yasunaga T."/>
            <person name="Honda T."/>
            <person name="Shinagawa H."/>
            <person name="Hattori M."/>
            <person name="Iida T."/>
        </authorList>
    </citation>
    <scope>NUCLEOTIDE SEQUENCE [LARGE SCALE GENOMIC DNA]</scope>
    <source>
        <strain>RIMD 2210633</strain>
    </source>
</reference>
<organism>
    <name type="scientific">Vibrio parahaemolyticus serotype O3:K6 (strain RIMD 2210633)</name>
    <dbReference type="NCBI Taxonomy" id="223926"/>
    <lineage>
        <taxon>Bacteria</taxon>
        <taxon>Pseudomonadati</taxon>
        <taxon>Pseudomonadota</taxon>
        <taxon>Gammaproteobacteria</taxon>
        <taxon>Vibrionales</taxon>
        <taxon>Vibrionaceae</taxon>
        <taxon>Vibrio</taxon>
    </lineage>
</organism>
<name>CLPX_VIBPA</name>
<sequence length="426" mass="46693">MTDKSKESGSGKLLYCSFCGKSQHEVRKLIAGPSVYICDECVDLCNDIIREEIKDVLPKKESEALPTPKQIREHLDDYVIGQDYAKKVLAVAVYNHYKRLRNGDTTSEGVELGKSNILLIGPTGSGKTLLAETLARFLDVPFTMADATTLTEAGYVGEDVENIIQKLLQKCDYDVAKAERGIVYIDEIDKISRKAENPSITRDVSGEGVQQALLKLIEGTVASVPPQGGRKHPQQEFLQVDTSKILFICGGAFAGLDKVIEQRVATGTGIGFGAEVRSKNETKTVGELFTQVEPEDLVKYGLIPEFIGRLPVTTTLTELDEEALIQILCEPKNALTKQYAALFELENAELEFREDALRAIAKKAMERKTGARGLRSILESVLLETMYELPSATDVSKVVIDESVINGESEPLLIYSNADNQAAGAE</sequence>
<gene>
    <name evidence="1" type="primary">clpX</name>
    <name type="ordered locus">VP0918</name>
</gene>
<accession>Q87R79</accession>
<keyword id="KW-0067">ATP-binding</keyword>
<keyword id="KW-0143">Chaperone</keyword>
<keyword id="KW-0479">Metal-binding</keyword>
<keyword id="KW-0547">Nucleotide-binding</keyword>
<keyword id="KW-0862">Zinc</keyword>